<reference evidence="7" key="1">
    <citation type="journal article" date="2005" name="Genome Res.">
        <title>Complete genome sequence of the hyperthermophilic archaeon Thermococcus kodakaraensis KOD1 and comparison with Pyrococcus genomes.</title>
        <authorList>
            <person name="Fukui T."/>
            <person name="Atomi H."/>
            <person name="Kanai T."/>
            <person name="Matsumi R."/>
            <person name="Fujiwara S."/>
            <person name="Imanaka T."/>
        </authorList>
    </citation>
    <scope>NUCLEOTIDE SEQUENCE [LARGE SCALE GENOMIC DNA]</scope>
    <source>
        <strain>ATCC BAA-918 / JCM 12380 / KOD1</strain>
    </source>
</reference>
<reference key="2">
    <citation type="journal article" date="2019" name="Mol. Microbiol.">
        <title>TFS and Spt4/5 accelerate transcription through archaeal histone-based chromatin.</title>
        <authorList>
            <person name="Sanders T.J."/>
            <person name="Lammers M."/>
            <person name="Marshall C.J."/>
            <person name="Walker J.E."/>
            <person name="Lynch E.R."/>
            <person name="Santangelo T.J."/>
        </authorList>
    </citation>
    <scope>FUNCTION</scope>
    <scope>SUBCELLULAR LOCATION</scope>
    <scope>DISRUPTION PHENOTYPE</scope>
    <scope>MUTAGENESIS OF 90-ASP-GLU-91</scope>
</reference>
<organism>
    <name type="scientific">Thermococcus kodakarensis (strain ATCC BAA-918 / JCM 12380 / KOD1)</name>
    <name type="common">Pyrococcus kodakaraensis (strain KOD1)</name>
    <dbReference type="NCBI Taxonomy" id="69014"/>
    <lineage>
        <taxon>Archaea</taxon>
        <taxon>Methanobacteriati</taxon>
        <taxon>Methanobacteriota</taxon>
        <taxon>Thermococci</taxon>
        <taxon>Thermococcales</taxon>
        <taxon>Thermococcaceae</taxon>
        <taxon>Thermococcus</taxon>
    </lineage>
</organism>
<comment type="function">
    <text evidence="1 4">Involved in transcriptional proofreading and fidelity. Induces RNA cleavage activity in RNA polymerase (RNAP) (PubMed:30592095). Stimulates transcription elongation by RNAP on both naked DNA and histone-bound DNA (chromatin), facilitating transcription through the histone barrier (PubMed:30592095). Stimulation depends on transcript cleavage (PubMed:30592095). In the presence of TFS, the cleavage activity of RNAP truncates RNA back to position +15 in a stepwise manner by releasing mainly dinucleotides from the 3'-end of the nascent RNA (By similarity). The truncated RNAs are able to continue elongation (PubMed:30592095). Misincorporation of nucleotides during elongation of transcription leads to arrested elongation complexes which are rescued by TFS-promoted removal of a dinucleotide from the 3'-end. TFS is able to induce a cleavage resynthesis cycle in stalled elongation complexes (resulting from the next missing nucleotide or a reduced incorporation rate of a wrong nucleotide) preventing misincorporation and enabling proofreading in a post-incorporation manner. Pausing of elongation complexes is the main determinant of TFS-induced RNA cleavage (By similarity).</text>
</comment>
<comment type="subcellular location">
    <subcellularLocation>
        <location evidence="4">Chromosome</location>
    </subcellularLocation>
</comment>
<comment type="disruption phenotype">
    <text evidence="4">Essential, it cannot be deleted (PubMed:30592095).</text>
</comment>
<comment type="similarity">
    <text evidence="6">Belongs to the archaeal rpoM/eukaryotic RPA12/RPB9/RPC11 RNA polymerase family.</text>
</comment>
<gene>
    <name evidence="5" type="primary">tfs</name>
    <name evidence="7" type="ordered locus">TK0533</name>
</gene>
<feature type="chain" id="PRO_0000460373" description="Transcription factor S">
    <location>
        <begin position="1"/>
        <end position="110"/>
    </location>
</feature>
<feature type="zinc finger region" description="TFIIS-type" evidence="2">
    <location>
        <begin position="67"/>
        <end position="107"/>
    </location>
</feature>
<feature type="binding site" evidence="3">
    <location>
        <position position="4"/>
    </location>
    <ligand>
        <name>Zn(2+)</name>
        <dbReference type="ChEBI" id="CHEBI:29105"/>
        <label>1</label>
    </ligand>
</feature>
<feature type="binding site" evidence="3">
    <location>
        <position position="7"/>
    </location>
    <ligand>
        <name>Zn(2+)</name>
        <dbReference type="ChEBI" id="CHEBI:29105"/>
        <label>1</label>
    </ligand>
</feature>
<feature type="binding site" evidence="3">
    <location>
        <position position="22"/>
    </location>
    <ligand>
        <name>Zn(2+)</name>
        <dbReference type="ChEBI" id="CHEBI:29105"/>
        <label>1</label>
    </ligand>
</feature>
<feature type="binding site" evidence="3">
    <location>
        <position position="25"/>
    </location>
    <ligand>
        <name>Zn(2+)</name>
        <dbReference type="ChEBI" id="CHEBI:29105"/>
        <label>1</label>
    </ligand>
</feature>
<feature type="binding site" evidence="2">
    <location>
        <position position="71"/>
    </location>
    <ligand>
        <name>Zn(2+)</name>
        <dbReference type="ChEBI" id="CHEBI:29105"/>
        <label>2</label>
    </ligand>
</feature>
<feature type="binding site" evidence="2">
    <location>
        <position position="74"/>
    </location>
    <ligand>
        <name>Zn(2+)</name>
        <dbReference type="ChEBI" id="CHEBI:29105"/>
        <label>2</label>
    </ligand>
</feature>
<feature type="binding site" evidence="2">
    <location>
        <position position="99"/>
    </location>
    <ligand>
        <name>Zn(2+)</name>
        <dbReference type="ChEBI" id="CHEBI:29105"/>
        <label>2</label>
    </ligand>
</feature>
<feature type="binding site" evidence="2">
    <location>
        <position position="102"/>
    </location>
    <ligand>
        <name>Zn(2+)</name>
        <dbReference type="ChEBI" id="CHEBI:29105"/>
        <label>2</label>
    </ligand>
</feature>
<feature type="mutagenesis site" description="No longer stimulates RNA polymerase (RNAP), no longer stimulates cleavage of nascent stalled transcripts by RNAP." evidence="4">
    <original>DE</original>
    <variation>AA</variation>
    <location>
        <begin position="90"/>
        <end position="91"/>
    </location>
</feature>
<dbReference type="EMBL" id="AP006878">
    <property type="protein sequence ID" value="BAD84722.1"/>
    <property type="molecule type" value="Genomic_DNA"/>
</dbReference>
<dbReference type="RefSeq" id="WP_011249488.1">
    <property type="nucleotide sequence ID" value="NC_006624.1"/>
</dbReference>
<dbReference type="SMR" id="Q5JF34"/>
<dbReference type="FunCoup" id="Q5JF34">
    <property type="interactions" value="107"/>
</dbReference>
<dbReference type="STRING" id="69014.TK0533"/>
<dbReference type="EnsemblBacteria" id="BAD84722">
    <property type="protein sequence ID" value="BAD84722"/>
    <property type="gene ID" value="TK0533"/>
</dbReference>
<dbReference type="GeneID" id="78447046"/>
<dbReference type="KEGG" id="tko:TK0533"/>
<dbReference type="PATRIC" id="fig|69014.16.peg.521"/>
<dbReference type="eggNOG" id="arCOG00579">
    <property type="taxonomic scope" value="Archaea"/>
</dbReference>
<dbReference type="HOGENOM" id="CLU_093932_3_2_2"/>
<dbReference type="InParanoid" id="Q5JF34"/>
<dbReference type="OrthoDB" id="72957at2157"/>
<dbReference type="PhylomeDB" id="Q5JF34"/>
<dbReference type="Proteomes" id="UP000000536">
    <property type="component" value="Chromosome"/>
</dbReference>
<dbReference type="GO" id="GO:0005694">
    <property type="term" value="C:chromosome"/>
    <property type="evidence" value="ECO:0007669"/>
    <property type="project" value="UniProtKB-SubCell"/>
</dbReference>
<dbReference type="GO" id="GO:0003677">
    <property type="term" value="F:DNA binding"/>
    <property type="evidence" value="ECO:0007669"/>
    <property type="project" value="UniProtKB-KW"/>
</dbReference>
<dbReference type="GO" id="GO:0003899">
    <property type="term" value="F:DNA-directed RNA polymerase activity"/>
    <property type="evidence" value="ECO:0007669"/>
    <property type="project" value="InterPro"/>
</dbReference>
<dbReference type="GO" id="GO:0008270">
    <property type="term" value="F:zinc ion binding"/>
    <property type="evidence" value="ECO:0007669"/>
    <property type="project" value="UniProtKB-KW"/>
</dbReference>
<dbReference type="GO" id="GO:0006351">
    <property type="term" value="P:DNA-templated transcription"/>
    <property type="evidence" value="ECO:0007669"/>
    <property type="project" value="InterPro"/>
</dbReference>
<dbReference type="GO" id="GO:0006355">
    <property type="term" value="P:regulation of DNA-templated transcription"/>
    <property type="evidence" value="ECO:0007669"/>
    <property type="project" value="InterPro"/>
</dbReference>
<dbReference type="CDD" id="cd10511">
    <property type="entry name" value="Zn-ribbon_TFS"/>
    <property type="match status" value="1"/>
</dbReference>
<dbReference type="FunFam" id="2.20.25.10:FF:000029">
    <property type="entry name" value="DNA-directed RNA polymerase subunit M"/>
    <property type="match status" value="1"/>
</dbReference>
<dbReference type="Gene3D" id="2.20.25.10">
    <property type="match status" value="2"/>
</dbReference>
<dbReference type="InterPro" id="IPR019761">
    <property type="entry name" value="DNA-dir_RNA_pol-M_15_CS"/>
</dbReference>
<dbReference type="InterPro" id="IPR012164">
    <property type="entry name" value="Rpa12/Rpb9/Rpc10/TFS"/>
</dbReference>
<dbReference type="InterPro" id="IPR006288">
    <property type="entry name" value="TFS"/>
</dbReference>
<dbReference type="InterPro" id="IPR001529">
    <property type="entry name" value="Zn_ribbon_RPB9"/>
</dbReference>
<dbReference type="InterPro" id="IPR001222">
    <property type="entry name" value="Znf_TFIIS"/>
</dbReference>
<dbReference type="NCBIfam" id="TIGR01384">
    <property type="entry name" value="TFS_arch"/>
    <property type="match status" value="1"/>
</dbReference>
<dbReference type="PANTHER" id="PTHR11239">
    <property type="entry name" value="DNA-DIRECTED RNA POLYMERASE"/>
    <property type="match status" value="1"/>
</dbReference>
<dbReference type="PANTHER" id="PTHR11239:SF12">
    <property type="entry name" value="DNA-DIRECTED RNA POLYMERASE III SUBUNIT RPC10"/>
    <property type="match status" value="1"/>
</dbReference>
<dbReference type="Pfam" id="PF02150">
    <property type="entry name" value="Zn_ribbon_RPB9"/>
    <property type="match status" value="1"/>
</dbReference>
<dbReference type="Pfam" id="PF01096">
    <property type="entry name" value="Zn_ribbon_TFIIS"/>
    <property type="match status" value="1"/>
</dbReference>
<dbReference type="PIRSF" id="PIRSF005586">
    <property type="entry name" value="RNApol_RpoM"/>
    <property type="match status" value="1"/>
</dbReference>
<dbReference type="SMART" id="SM00661">
    <property type="entry name" value="RPOL9"/>
    <property type="match status" value="1"/>
</dbReference>
<dbReference type="SMART" id="SM00440">
    <property type="entry name" value="ZnF_C2C2"/>
    <property type="match status" value="1"/>
</dbReference>
<dbReference type="SUPFAM" id="SSF57783">
    <property type="entry name" value="Zinc beta-ribbon"/>
    <property type="match status" value="2"/>
</dbReference>
<dbReference type="PROSITE" id="PS01030">
    <property type="entry name" value="RNA_POL_M_15KD"/>
    <property type="match status" value="1"/>
</dbReference>
<dbReference type="PROSITE" id="PS00466">
    <property type="entry name" value="ZF_TFIIS_1"/>
    <property type="match status" value="1"/>
</dbReference>
<dbReference type="PROSITE" id="PS51133">
    <property type="entry name" value="ZF_TFIIS_2"/>
    <property type="match status" value="1"/>
</dbReference>
<proteinExistence type="evidence at protein level"/>
<accession>Q5JF34</accession>
<keyword id="KW-0158">Chromosome</keyword>
<keyword id="KW-0238">DNA-binding</keyword>
<keyword id="KW-0479">Metal-binding</keyword>
<keyword id="KW-1185">Reference proteome</keyword>
<keyword id="KW-0804">Transcription</keyword>
<keyword id="KW-0805">Transcription regulation</keyword>
<keyword id="KW-0862">Zinc</keyword>
<keyword id="KW-0863">Zinc-finger</keyword>
<name>TFS_THEKO</name>
<sequence>MKFCPKCGNLMLPDRKRKVWVCRSCGYEEPFDEEKDREKTKITKKVEHKPDEEIIVVEQDLKTLPTTKVTCPKCGNDTAYWWEMQTRAGDEPSTIFYKCTKCGYTWRAYE</sequence>
<protein>
    <recommendedName>
        <fullName evidence="6">Transcription factor S</fullName>
        <shortName evidence="5">TFS</shortName>
    </recommendedName>
    <alternativeName>
        <fullName evidence="6">Transcription elongation factor IIS/RNA polymerase subunit homolog</fullName>
    </alternativeName>
</protein>
<evidence type="ECO:0000250" key="1">
    <source>
        <dbReference type="UniProtKB" id="Q9P9I8"/>
    </source>
</evidence>
<evidence type="ECO:0000255" key="2">
    <source>
        <dbReference type="PROSITE-ProRule" id="PRU00472"/>
    </source>
</evidence>
<evidence type="ECO:0000255" key="3">
    <source>
        <dbReference type="PROSITE-ProRule" id="PRU10145"/>
    </source>
</evidence>
<evidence type="ECO:0000269" key="4">
    <source>
    </source>
</evidence>
<evidence type="ECO:0000303" key="5">
    <source>
    </source>
</evidence>
<evidence type="ECO:0000305" key="6"/>
<evidence type="ECO:0000312" key="7">
    <source>
        <dbReference type="EMBL" id="BAD84722.1"/>
    </source>
</evidence>